<evidence type="ECO:0000255" key="1">
    <source>
        <dbReference type="HAMAP-Rule" id="MF_00736"/>
    </source>
</evidence>
<evidence type="ECO:0000305" key="2"/>
<feature type="chain" id="PRO_0000104430" description="Large ribosomal subunit protein uL11">
    <location>
        <begin position="1"/>
        <end position="157"/>
    </location>
</feature>
<dbReference type="EMBL" id="AE000782">
    <property type="protein sequence ID" value="AAB90697.1"/>
    <property type="molecule type" value="Genomic_DNA"/>
</dbReference>
<dbReference type="PIR" id="B69317">
    <property type="entry name" value="B69317"/>
</dbReference>
<dbReference type="RefSeq" id="WP_010878045.1">
    <property type="nucleotide sequence ID" value="NC_000917.1"/>
</dbReference>
<dbReference type="SMR" id="O29712"/>
<dbReference type="STRING" id="224325.AF_0538"/>
<dbReference type="PaxDb" id="224325-AF_0538"/>
<dbReference type="EnsemblBacteria" id="AAB90697">
    <property type="protein sequence ID" value="AAB90697"/>
    <property type="gene ID" value="AF_0538"/>
</dbReference>
<dbReference type="KEGG" id="afu:AF_0538"/>
<dbReference type="eggNOG" id="arCOG04372">
    <property type="taxonomic scope" value="Archaea"/>
</dbReference>
<dbReference type="HOGENOM" id="CLU_074237_4_0_2"/>
<dbReference type="OrthoDB" id="8842at2157"/>
<dbReference type="PhylomeDB" id="O29712"/>
<dbReference type="Proteomes" id="UP000002199">
    <property type="component" value="Chromosome"/>
</dbReference>
<dbReference type="GO" id="GO:0015934">
    <property type="term" value="C:large ribosomal subunit"/>
    <property type="evidence" value="ECO:0007669"/>
    <property type="project" value="TreeGrafter"/>
</dbReference>
<dbReference type="GO" id="GO:0070180">
    <property type="term" value="F:large ribosomal subunit rRNA binding"/>
    <property type="evidence" value="ECO:0007669"/>
    <property type="project" value="UniProtKB-UniRule"/>
</dbReference>
<dbReference type="GO" id="GO:0003735">
    <property type="term" value="F:structural constituent of ribosome"/>
    <property type="evidence" value="ECO:0007669"/>
    <property type="project" value="InterPro"/>
</dbReference>
<dbReference type="GO" id="GO:0006412">
    <property type="term" value="P:translation"/>
    <property type="evidence" value="ECO:0007669"/>
    <property type="project" value="UniProtKB-UniRule"/>
</dbReference>
<dbReference type="CDD" id="cd00349">
    <property type="entry name" value="Ribosomal_L11"/>
    <property type="match status" value="1"/>
</dbReference>
<dbReference type="FunFam" id="3.30.1550.10:FF:000007">
    <property type="entry name" value="50S ribosomal protein L11"/>
    <property type="match status" value="1"/>
</dbReference>
<dbReference type="Gene3D" id="1.10.10.250">
    <property type="entry name" value="Ribosomal protein L11, C-terminal domain"/>
    <property type="match status" value="1"/>
</dbReference>
<dbReference type="Gene3D" id="3.30.1550.10">
    <property type="entry name" value="Ribosomal protein L11/L12, N-terminal domain"/>
    <property type="match status" value="1"/>
</dbReference>
<dbReference type="HAMAP" id="MF_00736">
    <property type="entry name" value="Ribosomal_uL11"/>
    <property type="match status" value="1"/>
</dbReference>
<dbReference type="InterPro" id="IPR000911">
    <property type="entry name" value="Ribosomal_uL11"/>
</dbReference>
<dbReference type="InterPro" id="IPR020783">
    <property type="entry name" value="Ribosomal_uL11_C"/>
</dbReference>
<dbReference type="InterPro" id="IPR036769">
    <property type="entry name" value="Ribosomal_uL11_C_sf"/>
</dbReference>
<dbReference type="InterPro" id="IPR020785">
    <property type="entry name" value="Ribosomal_uL11_CS"/>
</dbReference>
<dbReference type="InterPro" id="IPR020784">
    <property type="entry name" value="Ribosomal_uL11_N"/>
</dbReference>
<dbReference type="InterPro" id="IPR036796">
    <property type="entry name" value="Ribosomal_uL11_N_sf"/>
</dbReference>
<dbReference type="NCBIfam" id="NF002232">
    <property type="entry name" value="PRK01143.1"/>
    <property type="match status" value="1"/>
</dbReference>
<dbReference type="PANTHER" id="PTHR11661">
    <property type="entry name" value="60S RIBOSOMAL PROTEIN L12"/>
    <property type="match status" value="1"/>
</dbReference>
<dbReference type="PANTHER" id="PTHR11661:SF1">
    <property type="entry name" value="LARGE RIBOSOMAL SUBUNIT PROTEIN UL11M"/>
    <property type="match status" value="1"/>
</dbReference>
<dbReference type="Pfam" id="PF00298">
    <property type="entry name" value="Ribosomal_L11"/>
    <property type="match status" value="1"/>
</dbReference>
<dbReference type="Pfam" id="PF03946">
    <property type="entry name" value="Ribosomal_L11_N"/>
    <property type="match status" value="1"/>
</dbReference>
<dbReference type="SMART" id="SM00649">
    <property type="entry name" value="RL11"/>
    <property type="match status" value="1"/>
</dbReference>
<dbReference type="SUPFAM" id="SSF54747">
    <property type="entry name" value="Ribosomal L11/L12e N-terminal domain"/>
    <property type="match status" value="1"/>
</dbReference>
<dbReference type="SUPFAM" id="SSF46906">
    <property type="entry name" value="Ribosomal protein L11, C-terminal domain"/>
    <property type="match status" value="1"/>
</dbReference>
<dbReference type="PROSITE" id="PS00359">
    <property type="entry name" value="RIBOSOMAL_L11"/>
    <property type="match status" value="1"/>
</dbReference>
<organism>
    <name type="scientific">Archaeoglobus fulgidus (strain ATCC 49558 / DSM 4304 / JCM 9628 / NBRC 100126 / VC-16)</name>
    <dbReference type="NCBI Taxonomy" id="224325"/>
    <lineage>
        <taxon>Archaea</taxon>
        <taxon>Methanobacteriati</taxon>
        <taxon>Methanobacteriota</taxon>
        <taxon>Archaeoglobi</taxon>
        <taxon>Archaeoglobales</taxon>
        <taxon>Archaeoglobaceae</taxon>
        <taxon>Archaeoglobus</taxon>
    </lineage>
</organism>
<protein>
    <recommendedName>
        <fullName evidence="1">Large ribosomal subunit protein uL11</fullName>
    </recommendedName>
    <alternativeName>
        <fullName evidence="2">50S ribosomal protein L11</fullName>
    </alternativeName>
</protein>
<name>RL11_ARCFU</name>
<proteinExistence type="inferred from homology"/>
<reference key="1">
    <citation type="journal article" date="1997" name="Nature">
        <title>The complete genome sequence of the hyperthermophilic, sulphate-reducing archaeon Archaeoglobus fulgidus.</title>
        <authorList>
            <person name="Klenk H.-P."/>
            <person name="Clayton R.A."/>
            <person name="Tomb J.-F."/>
            <person name="White O."/>
            <person name="Nelson K.E."/>
            <person name="Ketchum K.A."/>
            <person name="Dodson R.J."/>
            <person name="Gwinn M.L."/>
            <person name="Hickey E.K."/>
            <person name="Peterson J.D."/>
            <person name="Richardson D.L."/>
            <person name="Kerlavage A.R."/>
            <person name="Graham D.E."/>
            <person name="Kyrpides N.C."/>
            <person name="Fleischmann R.D."/>
            <person name="Quackenbush J."/>
            <person name="Lee N.H."/>
            <person name="Sutton G.G."/>
            <person name="Gill S.R."/>
            <person name="Kirkness E.F."/>
            <person name="Dougherty B.A."/>
            <person name="McKenney K."/>
            <person name="Adams M.D."/>
            <person name="Loftus B.J."/>
            <person name="Peterson S.N."/>
            <person name="Reich C.I."/>
            <person name="McNeil L.K."/>
            <person name="Badger J.H."/>
            <person name="Glodek A."/>
            <person name="Zhou L."/>
            <person name="Overbeek R."/>
            <person name="Gocayne J.D."/>
            <person name="Weidman J.F."/>
            <person name="McDonald L.A."/>
            <person name="Utterback T.R."/>
            <person name="Cotton M.D."/>
            <person name="Spriggs T."/>
            <person name="Artiach P."/>
            <person name="Kaine B.P."/>
            <person name="Sykes S.M."/>
            <person name="Sadow P.W."/>
            <person name="D'Andrea K.P."/>
            <person name="Bowman C."/>
            <person name="Fujii C."/>
            <person name="Garland S.A."/>
            <person name="Mason T.M."/>
            <person name="Olsen G.J."/>
            <person name="Fraser C.M."/>
            <person name="Smith H.O."/>
            <person name="Woese C.R."/>
            <person name="Venter J.C."/>
        </authorList>
    </citation>
    <scope>NUCLEOTIDE SEQUENCE [LARGE SCALE GENOMIC DNA]</scope>
    <source>
        <strain>ATCC 49558 / DSM 4304 / JCM 9628 / NBRC 100126 / VC-16</strain>
    </source>
</reference>
<keyword id="KW-1185">Reference proteome</keyword>
<keyword id="KW-0687">Ribonucleoprotein</keyword>
<keyword id="KW-0689">Ribosomal protein</keyword>
<keyword id="KW-0694">RNA-binding</keyword>
<keyword id="KW-0699">rRNA-binding</keyword>
<accession>O29712</accession>
<sequence length="157" mass="16894">MVQVVEVLVPGGQASPGPPLGPAIGPLGLNVKQVVDKINEATKDYEGLSVPVKIIVKDDRSFEIEVGIPPVSALIKRELGIEKGASNPGREVVGNLTMEQLLNIARIKRQQSLSYTLKEVVKEVLGTCNSMGITVEGKSPKELTRMIEEGQVEIPEE</sequence>
<gene>
    <name evidence="1" type="primary">rpl11</name>
    <name type="ordered locus">AF_0538</name>
</gene>
<comment type="function">
    <text evidence="1">Forms part of the ribosomal stalk which helps the ribosome interact with GTP-bound translation factors.</text>
</comment>
<comment type="subunit">
    <text evidence="1">Part of the ribosomal stalk of the 50S ribosomal subunit. Interacts with L10 and the large rRNA to form the base of the stalk. L10 forms an elongated spine to which L12 dimers bind in a sequential fashion forming a multimeric L10(L12)X complex.</text>
</comment>
<comment type="similarity">
    <text evidence="1">Belongs to the universal ribosomal protein uL11 family.</text>
</comment>